<evidence type="ECO:0000255" key="1">
    <source>
        <dbReference type="HAMAP-Rule" id="MF_01331"/>
    </source>
</evidence>
<evidence type="ECO:0000305" key="2"/>
<reference key="1">
    <citation type="submission" date="2006-12" db="EMBL/GenBank/DDBJ databases">
        <title>Complete sequence of Halorhodospira halophila SL1.</title>
        <authorList>
            <consortium name="US DOE Joint Genome Institute"/>
            <person name="Copeland A."/>
            <person name="Lucas S."/>
            <person name="Lapidus A."/>
            <person name="Barry K."/>
            <person name="Detter J.C."/>
            <person name="Glavina del Rio T."/>
            <person name="Hammon N."/>
            <person name="Israni S."/>
            <person name="Dalin E."/>
            <person name="Tice H."/>
            <person name="Pitluck S."/>
            <person name="Saunders E."/>
            <person name="Brettin T."/>
            <person name="Bruce D."/>
            <person name="Han C."/>
            <person name="Tapia R."/>
            <person name="Schmutz J."/>
            <person name="Larimer F."/>
            <person name="Land M."/>
            <person name="Hauser L."/>
            <person name="Kyrpides N."/>
            <person name="Mikhailova N."/>
            <person name="Hoff W."/>
            <person name="Richardson P."/>
        </authorList>
    </citation>
    <scope>NUCLEOTIDE SEQUENCE [LARGE SCALE GENOMIC DNA]</scope>
    <source>
        <strain>DSM 244 / SL1</strain>
    </source>
</reference>
<keyword id="KW-1185">Reference proteome</keyword>
<keyword id="KW-0687">Ribonucleoprotein</keyword>
<keyword id="KW-0689">Ribosomal protein</keyword>
<keyword id="KW-0694">RNA-binding</keyword>
<keyword id="KW-0699">rRNA-binding</keyword>
<gene>
    <name evidence="1" type="primary">rplV</name>
    <name type="ordered locus">Hhal_0853</name>
</gene>
<organism>
    <name type="scientific">Halorhodospira halophila (strain DSM 244 / SL1)</name>
    <name type="common">Ectothiorhodospira halophila (strain DSM 244 / SL1)</name>
    <dbReference type="NCBI Taxonomy" id="349124"/>
    <lineage>
        <taxon>Bacteria</taxon>
        <taxon>Pseudomonadati</taxon>
        <taxon>Pseudomonadota</taxon>
        <taxon>Gammaproteobacteria</taxon>
        <taxon>Chromatiales</taxon>
        <taxon>Ectothiorhodospiraceae</taxon>
        <taxon>Halorhodospira</taxon>
    </lineage>
</organism>
<name>RL22_HALHL</name>
<dbReference type="EMBL" id="CP000544">
    <property type="protein sequence ID" value="ABM61629.1"/>
    <property type="molecule type" value="Genomic_DNA"/>
</dbReference>
<dbReference type="RefSeq" id="WP_011813652.1">
    <property type="nucleotide sequence ID" value="NC_008789.1"/>
</dbReference>
<dbReference type="SMR" id="A1WVB7"/>
<dbReference type="STRING" id="349124.Hhal_0853"/>
<dbReference type="KEGG" id="hha:Hhal_0853"/>
<dbReference type="eggNOG" id="COG0091">
    <property type="taxonomic scope" value="Bacteria"/>
</dbReference>
<dbReference type="HOGENOM" id="CLU_083987_3_3_6"/>
<dbReference type="OrthoDB" id="9805969at2"/>
<dbReference type="Proteomes" id="UP000000647">
    <property type="component" value="Chromosome"/>
</dbReference>
<dbReference type="GO" id="GO:0022625">
    <property type="term" value="C:cytosolic large ribosomal subunit"/>
    <property type="evidence" value="ECO:0007669"/>
    <property type="project" value="TreeGrafter"/>
</dbReference>
<dbReference type="GO" id="GO:0019843">
    <property type="term" value="F:rRNA binding"/>
    <property type="evidence" value="ECO:0007669"/>
    <property type="project" value="UniProtKB-UniRule"/>
</dbReference>
<dbReference type="GO" id="GO:0003735">
    <property type="term" value="F:structural constituent of ribosome"/>
    <property type="evidence" value="ECO:0007669"/>
    <property type="project" value="InterPro"/>
</dbReference>
<dbReference type="GO" id="GO:0006412">
    <property type="term" value="P:translation"/>
    <property type="evidence" value="ECO:0007669"/>
    <property type="project" value="UniProtKB-UniRule"/>
</dbReference>
<dbReference type="CDD" id="cd00336">
    <property type="entry name" value="Ribosomal_L22"/>
    <property type="match status" value="1"/>
</dbReference>
<dbReference type="FunFam" id="3.90.470.10:FF:000001">
    <property type="entry name" value="50S ribosomal protein L22"/>
    <property type="match status" value="1"/>
</dbReference>
<dbReference type="Gene3D" id="3.90.470.10">
    <property type="entry name" value="Ribosomal protein L22/L17"/>
    <property type="match status" value="1"/>
</dbReference>
<dbReference type="HAMAP" id="MF_01331_B">
    <property type="entry name" value="Ribosomal_uL22_B"/>
    <property type="match status" value="1"/>
</dbReference>
<dbReference type="InterPro" id="IPR001063">
    <property type="entry name" value="Ribosomal_uL22"/>
</dbReference>
<dbReference type="InterPro" id="IPR005727">
    <property type="entry name" value="Ribosomal_uL22_bac/chlpt-type"/>
</dbReference>
<dbReference type="InterPro" id="IPR047867">
    <property type="entry name" value="Ribosomal_uL22_bac/org-type"/>
</dbReference>
<dbReference type="InterPro" id="IPR018260">
    <property type="entry name" value="Ribosomal_uL22_CS"/>
</dbReference>
<dbReference type="InterPro" id="IPR036394">
    <property type="entry name" value="Ribosomal_uL22_sf"/>
</dbReference>
<dbReference type="NCBIfam" id="TIGR01044">
    <property type="entry name" value="rplV_bact"/>
    <property type="match status" value="1"/>
</dbReference>
<dbReference type="PANTHER" id="PTHR13501">
    <property type="entry name" value="CHLOROPLAST 50S RIBOSOMAL PROTEIN L22-RELATED"/>
    <property type="match status" value="1"/>
</dbReference>
<dbReference type="PANTHER" id="PTHR13501:SF8">
    <property type="entry name" value="LARGE RIBOSOMAL SUBUNIT PROTEIN UL22M"/>
    <property type="match status" value="1"/>
</dbReference>
<dbReference type="Pfam" id="PF00237">
    <property type="entry name" value="Ribosomal_L22"/>
    <property type="match status" value="1"/>
</dbReference>
<dbReference type="SUPFAM" id="SSF54843">
    <property type="entry name" value="Ribosomal protein L22"/>
    <property type="match status" value="1"/>
</dbReference>
<dbReference type="PROSITE" id="PS00464">
    <property type="entry name" value="RIBOSOMAL_L22"/>
    <property type="match status" value="1"/>
</dbReference>
<sequence length="110" mass="12300">METQAKLRFSRVSPQKARLVADQIRGLPVDDALRTLEYSPRKAAEIVRKVLESAVANAEHNDGADVDELRVARIFVDEGPTMKRIQPRAKGRANRILKRTSHITVAVAED</sequence>
<feature type="chain" id="PRO_1000052580" description="Large ribosomal subunit protein uL22">
    <location>
        <begin position="1"/>
        <end position="110"/>
    </location>
</feature>
<protein>
    <recommendedName>
        <fullName evidence="1">Large ribosomal subunit protein uL22</fullName>
    </recommendedName>
    <alternativeName>
        <fullName evidence="2">50S ribosomal protein L22</fullName>
    </alternativeName>
</protein>
<comment type="function">
    <text evidence="1">This protein binds specifically to 23S rRNA; its binding is stimulated by other ribosomal proteins, e.g. L4, L17, and L20. It is important during the early stages of 50S assembly. It makes multiple contacts with different domains of the 23S rRNA in the assembled 50S subunit and ribosome (By similarity).</text>
</comment>
<comment type="function">
    <text evidence="1">The globular domain of the protein is located near the polypeptide exit tunnel on the outside of the subunit, while an extended beta-hairpin is found that lines the wall of the exit tunnel in the center of the 70S ribosome.</text>
</comment>
<comment type="subunit">
    <text evidence="1">Part of the 50S ribosomal subunit.</text>
</comment>
<comment type="similarity">
    <text evidence="1">Belongs to the universal ribosomal protein uL22 family.</text>
</comment>
<accession>A1WVB7</accession>
<proteinExistence type="inferred from homology"/>